<protein>
    <recommendedName>
        <fullName>Probable maleylacetoacetate isomerase 1</fullName>
        <shortName>MAAI 1</shortName>
        <ecNumber>5.2.1.2</ecNumber>
    </recommendedName>
    <alternativeName>
        <fullName>Glutathione S-transferase zeta 1</fullName>
        <ecNumber>2.5.1.18</ecNumber>
    </alternativeName>
</protein>
<proteinExistence type="evidence at protein level"/>
<dbReference type="EC" id="5.2.1.2"/>
<dbReference type="EC" id="2.5.1.18"/>
<dbReference type="EMBL" id="AE014297">
    <property type="protein sequence ID" value="AAF54381.1"/>
    <property type="molecule type" value="Genomic_DNA"/>
</dbReference>
<dbReference type="EMBL" id="AY061527">
    <property type="protein sequence ID" value="AAL29075.1"/>
    <property type="molecule type" value="mRNA"/>
</dbReference>
<dbReference type="RefSeq" id="NP_649894.1">
    <property type="nucleotide sequence ID" value="NM_141637.3"/>
</dbReference>
<dbReference type="SMR" id="Q9VHD3"/>
<dbReference type="BioGRID" id="66293">
    <property type="interactions" value="3"/>
</dbReference>
<dbReference type="FunCoup" id="Q9VHD3">
    <property type="interactions" value="872"/>
</dbReference>
<dbReference type="IntAct" id="Q9VHD3">
    <property type="interactions" value="1"/>
</dbReference>
<dbReference type="STRING" id="7227.FBpp0081522"/>
<dbReference type="PaxDb" id="7227-FBpp0081522"/>
<dbReference type="DNASU" id="41132"/>
<dbReference type="EnsemblMetazoa" id="FBtr0082044">
    <property type="protein sequence ID" value="FBpp0081522"/>
    <property type="gene ID" value="FBgn0037696"/>
</dbReference>
<dbReference type="GeneID" id="41132"/>
<dbReference type="KEGG" id="dme:Dmel_CG9362"/>
<dbReference type="UCSC" id="CG9362-RA">
    <property type="organism name" value="d. melanogaster"/>
</dbReference>
<dbReference type="AGR" id="FB:FBgn0037696"/>
<dbReference type="CTD" id="2954"/>
<dbReference type="FlyBase" id="FBgn0037696">
    <property type="gene designation" value="GstZ1"/>
</dbReference>
<dbReference type="VEuPathDB" id="VectorBase:FBgn0037696"/>
<dbReference type="eggNOG" id="KOG0868">
    <property type="taxonomic scope" value="Eukaryota"/>
</dbReference>
<dbReference type="GeneTree" id="ENSGT00390000006580"/>
<dbReference type="HOGENOM" id="CLU_011226_20_1_1"/>
<dbReference type="InParanoid" id="Q9VHD3"/>
<dbReference type="OMA" id="VYNAHRF"/>
<dbReference type="OrthoDB" id="202840at2759"/>
<dbReference type="PhylomeDB" id="Q9VHD3"/>
<dbReference type="UniPathway" id="UPA00139">
    <property type="reaction ID" value="UER00340"/>
</dbReference>
<dbReference type="BioGRID-ORCS" id="41132">
    <property type="hits" value="0 hits in 3 CRISPR screens"/>
</dbReference>
<dbReference type="GenomeRNAi" id="41132"/>
<dbReference type="PRO" id="PR:Q9VHD3"/>
<dbReference type="Proteomes" id="UP000000803">
    <property type="component" value="Chromosome 3R"/>
</dbReference>
<dbReference type="Bgee" id="FBgn0037696">
    <property type="expression patterns" value="Expressed in saliva-secreting gland and 24 other cell types or tissues"/>
</dbReference>
<dbReference type="GO" id="GO:0005737">
    <property type="term" value="C:cytoplasm"/>
    <property type="evidence" value="ECO:0000250"/>
    <property type="project" value="FlyBase"/>
</dbReference>
<dbReference type="GO" id="GO:0005829">
    <property type="term" value="C:cytosol"/>
    <property type="evidence" value="ECO:0000250"/>
    <property type="project" value="FlyBase"/>
</dbReference>
<dbReference type="GO" id="GO:0005759">
    <property type="term" value="C:mitochondrial matrix"/>
    <property type="evidence" value="ECO:0000250"/>
    <property type="project" value="FlyBase"/>
</dbReference>
<dbReference type="GO" id="GO:0005739">
    <property type="term" value="C:mitochondrion"/>
    <property type="evidence" value="ECO:0000318"/>
    <property type="project" value="GO_Central"/>
</dbReference>
<dbReference type="GO" id="GO:0004364">
    <property type="term" value="F:glutathione transferase activity"/>
    <property type="evidence" value="ECO:0000314"/>
    <property type="project" value="FlyBase"/>
</dbReference>
<dbReference type="GO" id="GO:0016034">
    <property type="term" value="F:maleylacetoacetate isomerase activity"/>
    <property type="evidence" value="ECO:0000250"/>
    <property type="project" value="FlyBase"/>
</dbReference>
<dbReference type="GO" id="GO:0006749">
    <property type="term" value="P:glutathione metabolic process"/>
    <property type="evidence" value="ECO:0000314"/>
    <property type="project" value="FlyBase"/>
</dbReference>
<dbReference type="GO" id="GO:0006559">
    <property type="term" value="P:L-phenylalanine catabolic process"/>
    <property type="evidence" value="ECO:0000318"/>
    <property type="project" value="GO_Central"/>
</dbReference>
<dbReference type="GO" id="GO:0006572">
    <property type="term" value="P:tyrosine catabolic process"/>
    <property type="evidence" value="ECO:0007669"/>
    <property type="project" value="UniProtKB-KW"/>
</dbReference>
<dbReference type="CDD" id="cd03191">
    <property type="entry name" value="GST_C_Zeta"/>
    <property type="match status" value="1"/>
</dbReference>
<dbReference type="CDD" id="cd03042">
    <property type="entry name" value="GST_N_Zeta"/>
    <property type="match status" value="1"/>
</dbReference>
<dbReference type="FunFam" id="1.20.1050.10:FF:000010">
    <property type="entry name" value="Maleylacetoacetate isomerase isoform 1"/>
    <property type="match status" value="1"/>
</dbReference>
<dbReference type="FunFam" id="3.40.30.10:FF:000041">
    <property type="entry name" value="Maleylacetoacetate isomerase isoform 1"/>
    <property type="match status" value="1"/>
</dbReference>
<dbReference type="Gene3D" id="1.20.1050.10">
    <property type="match status" value="1"/>
</dbReference>
<dbReference type="Gene3D" id="3.40.30.10">
    <property type="entry name" value="Glutaredoxin"/>
    <property type="match status" value="1"/>
</dbReference>
<dbReference type="InterPro" id="IPR010987">
    <property type="entry name" value="Glutathione-S-Trfase_C-like"/>
</dbReference>
<dbReference type="InterPro" id="IPR036282">
    <property type="entry name" value="Glutathione-S-Trfase_C_sf"/>
</dbReference>
<dbReference type="InterPro" id="IPR040079">
    <property type="entry name" value="Glutathione_S-Trfase"/>
</dbReference>
<dbReference type="InterPro" id="IPR004045">
    <property type="entry name" value="Glutathione_S-Trfase_N"/>
</dbReference>
<dbReference type="InterPro" id="IPR004046">
    <property type="entry name" value="GST_C"/>
</dbReference>
<dbReference type="InterPro" id="IPR005955">
    <property type="entry name" value="GST_Zeta"/>
</dbReference>
<dbReference type="InterPro" id="IPR034330">
    <property type="entry name" value="GST_Zeta_C"/>
</dbReference>
<dbReference type="InterPro" id="IPR034333">
    <property type="entry name" value="GST_Zeta_N"/>
</dbReference>
<dbReference type="InterPro" id="IPR036249">
    <property type="entry name" value="Thioredoxin-like_sf"/>
</dbReference>
<dbReference type="NCBIfam" id="TIGR01262">
    <property type="entry name" value="maiA"/>
    <property type="match status" value="1"/>
</dbReference>
<dbReference type="PANTHER" id="PTHR42673">
    <property type="entry name" value="MALEYLACETOACETATE ISOMERASE"/>
    <property type="match status" value="1"/>
</dbReference>
<dbReference type="PANTHER" id="PTHR42673:SF4">
    <property type="entry name" value="MALEYLACETOACETATE ISOMERASE"/>
    <property type="match status" value="1"/>
</dbReference>
<dbReference type="Pfam" id="PF14497">
    <property type="entry name" value="GST_C_3"/>
    <property type="match status" value="1"/>
</dbReference>
<dbReference type="Pfam" id="PF13417">
    <property type="entry name" value="GST_N_3"/>
    <property type="match status" value="1"/>
</dbReference>
<dbReference type="SFLD" id="SFLDS00019">
    <property type="entry name" value="Glutathione_Transferase_(cytos"/>
    <property type="match status" value="1"/>
</dbReference>
<dbReference type="SFLD" id="SFLDG00358">
    <property type="entry name" value="Main_(cytGST)"/>
    <property type="match status" value="1"/>
</dbReference>
<dbReference type="SUPFAM" id="SSF47616">
    <property type="entry name" value="GST C-terminal domain-like"/>
    <property type="match status" value="1"/>
</dbReference>
<dbReference type="SUPFAM" id="SSF52833">
    <property type="entry name" value="Thioredoxin-like"/>
    <property type="match status" value="1"/>
</dbReference>
<dbReference type="PROSITE" id="PS50405">
    <property type="entry name" value="GST_CTER"/>
    <property type="match status" value="1"/>
</dbReference>
<dbReference type="PROSITE" id="PS50404">
    <property type="entry name" value="GST_NTER"/>
    <property type="match status" value="1"/>
</dbReference>
<keyword id="KW-0963">Cytoplasm</keyword>
<keyword id="KW-0413">Isomerase</keyword>
<keyword id="KW-0585">Phenylalanine catabolism</keyword>
<keyword id="KW-1185">Reference proteome</keyword>
<keyword id="KW-0808">Transferase</keyword>
<keyword id="KW-0828">Tyrosine catabolism</keyword>
<accession>Q9VHD3</accession>
<feature type="chain" id="PRO_0000186026" description="Probable maleylacetoacetate isomerase 1">
    <location>
        <begin position="1"/>
        <end position="246"/>
    </location>
</feature>
<feature type="domain" description="GST N-terminal">
    <location>
        <begin position="32"/>
        <end position="116"/>
    </location>
</feature>
<feature type="domain" description="GST C-terminal">
    <location>
        <begin position="121"/>
        <end position="241"/>
    </location>
</feature>
<feature type="binding site" evidence="1">
    <location>
        <begin position="42"/>
        <end position="47"/>
    </location>
    <ligand>
        <name>glutathione</name>
        <dbReference type="ChEBI" id="CHEBI:57925"/>
    </ligand>
</feature>
<feature type="binding site" evidence="1">
    <location>
        <position position="88"/>
    </location>
    <ligand>
        <name>glutathione</name>
        <dbReference type="ChEBI" id="CHEBI:57925"/>
    </ligand>
</feature>
<feature type="binding site" evidence="1">
    <location>
        <begin position="100"/>
        <end position="101"/>
    </location>
    <ligand>
        <name>glutathione</name>
        <dbReference type="ChEBI" id="CHEBI:57925"/>
    </ligand>
</feature>
<feature type="binding site" evidence="1">
    <location>
        <position position="140"/>
    </location>
    <ligand>
        <name>glutathione</name>
        <dbReference type="ChEBI" id="CHEBI:57925"/>
    </ligand>
</feature>
<feature type="binding site" evidence="1">
    <location>
        <begin position="144"/>
        <end position="146"/>
    </location>
    <ligand>
        <name>glutathione</name>
        <dbReference type="ChEBI" id="CHEBI:57925"/>
    </ligand>
</feature>
<gene>
    <name type="primary">GstZ1</name>
    <name type="ORF">CG9362</name>
</gene>
<comment type="function">
    <text evidence="2">Catalyzes the glutathione dependent oxygenation of dichloroacetic acid to glyoxylic acid in vitro. Possesses low glutathione thioltransferase activity toward 4-hydroxynonenal (4-HNE). Has no glutathione thioltransferase activity with adrenochrome, phenethyl isothiocyanate (PEITC), 5-hydroperoxyeicosatetraenoic acid ((5S)-HpETE), prostaglandin A2 (PGA2) or 2-hydroxyethyldisulfide (HED).</text>
</comment>
<comment type="catalytic activity">
    <reaction evidence="2">
        <text>4-maleylacetoacetate = 4-fumarylacetoacetate</text>
        <dbReference type="Rhea" id="RHEA:14817"/>
        <dbReference type="ChEBI" id="CHEBI:17105"/>
        <dbReference type="ChEBI" id="CHEBI:18034"/>
        <dbReference type="EC" id="5.2.1.2"/>
    </reaction>
</comment>
<comment type="catalytic activity">
    <reaction evidence="2">
        <text>RX + glutathione = an S-substituted glutathione + a halide anion + H(+)</text>
        <dbReference type="Rhea" id="RHEA:16437"/>
        <dbReference type="ChEBI" id="CHEBI:15378"/>
        <dbReference type="ChEBI" id="CHEBI:16042"/>
        <dbReference type="ChEBI" id="CHEBI:17792"/>
        <dbReference type="ChEBI" id="CHEBI:57925"/>
        <dbReference type="ChEBI" id="CHEBI:90779"/>
        <dbReference type="EC" id="2.5.1.18"/>
    </reaction>
</comment>
<comment type="cofactor">
    <cofactor evidence="2">
        <name>glutathione</name>
        <dbReference type="ChEBI" id="CHEBI:57925"/>
    </cofactor>
    <text evidence="2">Glutathione is required for the MAAI activity.</text>
</comment>
<comment type="pathway">
    <text>Amino-acid degradation; L-phenylalanine degradation; acetoacetate and fumarate from L-phenylalanine: step 5/6.</text>
</comment>
<comment type="subcellular location">
    <subcellularLocation>
        <location evidence="1">Cytoplasm</location>
    </subcellularLocation>
</comment>
<comment type="developmental stage">
    <text evidence="2">Expressed during embryogenesis.</text>
</comment>
<comment type="similarity">
    <text evidence="3">Belongs to the GST superfamily. Zeta family.</text>
</comment>
<sequence length="246" mass="27890">MASATQLTHRGIHLAGLYRSSWSKPLFRHLATKPILYSYWPSSCSWRVRVALAIKKIDYDIKPTSLLKTVSGHAYTDEYREVNPMQKVPSLKIDGHTLCDSVAIIHYLEETRPQPALLPQDPVKRAKIREIVELICSGIQPLQNVSVLDHIGKDQSLQWAQHWISRGFQGLEKVLSHSAGKFCVGDELSMADICLVPQVRNARRYKADLTPYPTIVRLNQELQELDVFKATHPSTQPDCPPEFAKK</sequence>
<evidence type="ECO:0000250" key="1"/>
<evidence type="ECO:0000269" key="2">
    <source>
    </source>
</evidence>
<evidence type="ECO:0000305" key="3"/>
<organism>
    <name type="scientific">Drosophila melanogaster</name>
    <name type="common">Fruit fly</name>
    <dbReference type="NCBI Taxonomy" id="7227"/>
    <lineage>
        <taxon>Eukaryota</taxon>
        <taxon>Metazoa</taxon>
        <taxon>Ecdysozoa</taxon>
        <taxon>Arthropoda</taxon>
        <taxon>Hexapoda</taxon>
        <taxon>Insecta</taxon>
        <taxon>Pterygota</taxon>
        <taxon>Neoptera</taxon>
        <taxon>Endopterygota</taxon>
        <taxon>Diptera</taxon>
        <taxon>Brachycera</taxon>
        <taxon>Muscomorpha</taxon>
        <taxon>Ephydroidea</taxon>
        <taxon>Drosophilidae</taxon>
        <taxon>Drosophila</taxon>
        <taxon>Sophophora</taxon>
    </lineage>
</organism>
<reference key="1">
    <citation type="journal article" date="2012" name="Biochem. J.">
        <title>A preliminary characterization of the cytosolic glutathione transferase proteome from Drosophila melanogaster.</title>
        <authorList>
            <person name="Saisawang C."/>
            <person name="Wongsantichon J."/>
            <person name="Ketterman A.J."/>
        </authorList>
    </citation>
    <scope>NUCLEOTIDE SEQUENCE [MRNA]</scope>
    <scope>FUNCTION</scope>
    <scope>CATALYTIC ACTIVITY</scope>
    <scope>COFACTOR</scope>
    <scope>DEVELOPMENTAL STAGE</scope>
</reference>
<reference key="2">
    <citation type="journal article" date="2000" name="Science">
        <title>The genome sequence of Drosophila melanogaster.</title>
        <authorList>
            <person name="Adams M.D."/>
            <person name="Celniker S.E."/>
            <person name="Holt R.A."/>
            <person name="Evans C.A."/>
            <person name="Gocayne J.D."/>
            <person name="Amanatides P.G."/>
            <person name="Scherer S.E."/>
            <person name="Li P.W."/>
            <person name="Hoskins R.A."/>
            <person name="Galle R.F."/>
            <person name="George R.A."/>
            <person name="Lewis S.E."/>
            <person name="Richards S."/>
            <person name="Ashburner M."/>
            <person name="Henderson S.N."/>
            <person name="Sutton G.G."/>
            <person name="Wortman J.R."/>
            <person name="Yandell M.D."/>
            <person name="Zhang Q."/>
            <person name="Chen L.X."/>
            <person name="Brandon R.C."/>
            <person name="Rogers Y.-H.C."/>
            <person name="Blazej R.G."/>
            <person name="Champe M."/>
            <person name="Pfeiffer B.D."/>
            <person name="Wan K.H."/>
            <person name="Doyle C."/>
            <person name="Baxter E.G."/>
            <person name="Helt G."/>
            <person name="Nelson C.R."/>
            <person name="Miklos G.L.G."/>
            <person name="Abril J.F."/>
            <person name="Agbayani A."/>
            <person name="An H.-J."/>
            <person name="Andrews-Pfannkoch C."/>
            <person name="Baldwin D."/>
            <person name="Ballew R.M."/>
            <person name="Basu A."/>
            <person name="Baxendale J."/>
            <person name="Bayraktaroglu L."/>
            <person name="Beasley E.M."/>
            <person name="Beeson K.Y."/>
            <person name="Benos P.V."/>
            <person name="Berman B.P."/>
            <person name="Bhandari D."/>
            <person name="Bolshakov S."/>
            <person name="Borkova D."/>
            <person name="Botchan M.R."/>
            <person name="Bouck J."/>
            <person name="Brokstein P."/>
            <person name="Brottier P."/>
            <person name="Burtis K.C."/>
            <person name="Busam D.A."/>
            <person name="Butler H."/>
            <person name="Cadieu E."/>
            <person name="Center A."/>
            <person name="Chandra I."/>
            <person name="Cherry J.M."/>
            <person name="Cawley S."/>
            <person name="Dahlke C."/>
            <person name="Davenport L.B."/>
            <person name="Davies P."/>
            <person name="de Pablos B."/>
            <person name="Delcher A."/>
            <person name="Deng Z."/>
            <person name="Mays A.D."/>
            <person name="Dew I."/>
            <person name="Dietz S.M."/>
            <person name="Dodson K."/>
            <person name="Doup L.E."/>
            <person name="Downes M."/>
            <person name="Dugan-Rocha S."/>
            <person name="Dunkov B.C."/>
            <person name="Dunn P."/>
            <person name="Durbin K.J."/>
            <person name="Evangelista C.C."/>
            <person name="Ferraz C."/>
            <person name="Ferriera S."/>
            <person name="Fleischmann W."/>
            <person name="Fosler C."/>
            <person name="Gabrielian A.E."/>
            <person name="Garg N.S."/>
            <person name="Gelbart W.M."/>
            <person name="Glasser K."/>
            <person name="Glodek A."/>
            <person name="Gong F."/>
            <person name="Gorrell J.H."/>
            <person name="Gu Z."/>
            <person name="Guan P."/>
            <person name="Harris M."/>
            <person name="Harris N.L."/>
            <person name="Harvey D.A."/>
            <person name="Heiman T.J."/>
            <person name="Hernandez J.R."/>
            <person name="Houck J."/>
            <person name="Hostin D."/>
            <person name="Houston K.A."/>
            <person name="Howland T.J."/>
            <person name="Wei M.-H."/>
            <person name="Ibegwam C."/>
            <person name="Jalali M."/>
            <person name="Kalush F."/>
            <person name="Karpen G.H."/>
            <person name="Ke Z."/>
            <person name="Kennison J.A."/>
            <person name="Ketchum K.A."/>
            <person name="Kimmel B.E."/>
            <person name="Kodira C.D."/>
            <person name="Kraft C.L."/>
            <person name="Kravitz S."/>
            <person name="Kulp D."/>
            <person name="Lai Z."/>
            <person name="Lasko P."/>
            <person name="Lei Y."/>
            <person name="Levitsky A.A."/>
            <person name="Li J.H."/>
            <person name="Li Z."/>
            <person name="Liang Y."/>
            <person name="Lin X."/>
            <person name="Liu X."/>
            <person name="Mattei B."/>
            <person name="McIntosh T.C."/>
            <person name="McLeod M.P."/>
            <person name="McPherson D."/>
            <person name="Merkulov G."/>
            <person name="Milshina N.V."/>
            <person name="Mobarry C."/>
            <person name="Morris J."/>
            <person name="Moshrefi A."/>
            <person name="Mount S.M."/>
            <person name="Moy M."/>
            <person name="Murphy B."/>
            <person name="Murphy L."/>
            <person name="Muzny D.M."/>
            <person name="Nelson D.L."/>
            <person name="Nelson D.R."/>
            <person name="Nelson K.A."/>
            <person name="Nixon K."/>
            <person name="Nusskern D.R."/>
            <person name="Pacleb J.M."/>
            <person name="Palazzolo M."/>
            <person name="Pittman G.S."/>
            <person name="Pan S."/>
            <person name="Pollard J."/>
            <person name="Puri V."/>
            <person name="Reese M.G."/>
            <person name="Reinert K."/>
            <person name="Remington K."/>
            <person name="Saunders R.D.C."/>
            <person name="Scheeler F."/>
            <person name="Shen H."/>
            <person name="Shue B.C."/>
            <person name="Siden-Kiamos I."/>
            <person name="Simpson M."/>
            <person name="Skupski M.P."/>
            <person name="Smith T.J."/>
            <person name="Spier E."/>
            <person name="Spradling A.C."/>
            <person name="Stapleton M."/>
            <person name="Strong R."/>
            <person name="Sun E."/>
            <person name="Svirskas R."/>
            <person name="Tector C."/>
            <person name="Turner R."/>
            <person name="Venter E."/>
            <person name="Wang A.H."/>
            <person name="Wang X."/>
            <person name="Wang Z.-Y."/>
            <person name="Wassarman D.A."/>
            <person name="Weinstock G.M."/>
            <person name="Weissenbach J."/>
            <person name="Williams S.M."/>
            <person name="Woodage T."/>
            <person name="Worley K.C."/>
            <person name="Wu D."/>
            <person name="Yang S."/>
            <person name="Yao Q.A."/>
            <person name="Ye J."/>
            <person name="Yeh R.-F."/>
            <person name="Zaveri J.S."/>
            <person name="Zhan M."/>
            <person name="Zhang G."/>
            <person name="Zhao Q."/>
            <person name="Zheng L."/>
            <person name="Zheng X.H."/>
            <person name="Zhong F.N."/>
            <person name="Zhong W."/>
            <person name="Zhou X."/>
            <person name="Zhu S.C."/>
            <person name="Zhu X."/>
            <person name="Smith H.O."/>
            <person name="Gibbs R.A."/>
            <person name="Myers E.W."/>
            <person name="Rubin G.M."/>
            <person name="Venter J.C."/>
        </authorList>
    </citation>
    <scope>NUCLEOTIDE SEQUENCE [LARGE SCALE GENOMIC DNA]</scope>
    <source>
        <strain>Berkeley</strain>
    </source>
</reference>
<reference key="3">
    <citation type="journal article" date="2002" name="Genome Biol.">
        <title>Annotation of the Drosophila melanogaster euchromatic genome: a systematic review.</title>
        <authorList>
            <person name="Misra S."/>
            <person name="Crosby M.A."/>
            <person name="Mungall C.J."/>
            <person name="Matthews B.B."/>
            <person name="Campbell K.S."/>
            <person name="Hradecky P."/>
            <person name="Huang Y."/>
            <person name="Kaminker J.S."/>
            <person name="Millburn G.H."/>
            <person name="Prochnik S.E."/>
            <person name="Smith C.D."/>
            <person name="Tupy J.L."/>
            <person name="Whitfield E.J."/>
            <person name="Bayraktaroglu L."/>
            <person name="Berman B.P."/>
            <person name="Bettencourt B.R."/>
            <person name="Celniker S.E."/>
            <person name="de Grey A.D.N.J."/>
            <person name="Drysdale R.A."/>
            <person name="Harris N.L."/>
            <person name="Richter J."/>
            <person name="Russo S."/>
            <person name="Schroeder A.J."/>
            <person name="Shu S.Q."/>
            <person name="Stapleton M."/>
            <person name="Yamada C."/>
            <person name="Ashburner M."/>
            <person name="Gelbart W.M."/>
            <person name="Rubin G.M."/>
            <person name="Lewis S.E."/>
        </authorList>
    </citation>
    <scope>GENOME REANNOTATION</scope>
    <source>
        <strain>Berkeley</strain>
    </source>
</reference>
<reference key="4">
    <citation type="journal article" date="2002" name="Genome Biol.">
        <title>A Drosophila full-length cDNA resource.</title>
        <authorList>
            <person name="Stapleton M."/>
            <person name="Carlson J.W."/>
            <person name="Brokstein P."/>
            <person name="Yu C."/>
            <person name="Champe M."/>
            <person name="George R.A."/>
            <person name="Guarin H."/>
            <person name="Kronmiller B."/>
            <person name="Pacleb J.M."/>
            <person name="Park S."/>
            <person name="Wan K.H."/>
            <person name="Rubin G.M."/>
            <person name="Celniker S.E."/>
        </authorList>
    </citation>
    <scope>NUCLEOTIDE SEQUENCE [LARGE SCALE MRNA]</scope>
    <source>
        <strain>Berkeley</strain>
        <tissue>Embryo</tissue>
    </source>
</reference>
<name>MAAI1_DROME</name>